<organism>
    <name type="scientific">Actinobacillus pleuropneumoniae serotype 3 (strain JL03)</name>
    <dbReference type="NCBI Taxonomy" id="434271"/>
    <lineage>
        <taxon>Bacteria</taxon>
        <taxon>Pseudomonadati</taxon>
        <taxon>Pseudomonadota</taxon>
        <taxon>Gammaproteobacteria</taxon>
        <taxon>Pasteurellales</taxon>
        <taxon>Pasteurellaceae</taxon>
        <taxon>Actinobacillus</taxon>
    </lineage>
</organism>
<keyword id="KW-0030">Aminoacyl-tRNA synthetase</keyword>
<keyword id="KW-0067">ATP-binding</keyword>
<keyword id="KW-0963">Cytoplasm</keyword>
<keyword id="KW-0436">Ligase</keyword>
<keyword id="KW-0547">Nucleotide-binding</keyword>
<keyword id="KW-0648">Protein biosynthesis</keyword>
<proteinExistence type="inferred from homology"/>
<feature type="chain" id="PRO_1000101260" description="Glycine--tRNA ligase beta subunit">
    <location>
        <begin position="1"/>
        <end position="689"/>
    </location>
</feature>
<evidence type="ECO:0000255" key="1">
    <source>
        <dbReference type="HAMAP-Rule" id="MF_00255"/>
    </source>
</evidence>
<sequence length="689" mass="76151">MTTQNFLAEIGTEELPPKALKKLATAFAENVENELNQAGLSFEKVEWFAAPRRLAVKALGLATAQPSKKIEKRGPAVSAAFDADGKPTKAAEGWARGCGISVEQAERLATDKGEWLVHRAVIEGQPTKNLLVDIISRSLANLPIPKMMRWGDKTEQFVRPVHTVTLFFGGELIEGEILGVKIANVVRGHRFLGEREFTISHADEYLTALREKGSVIADFNERKALILAKSQEKATALGGVADIEEDLLDEVTSLVEFPNVLTAKFEERFLAVPAEALVYTMKGDQKYFPIYDKDGKLLPHFIFVSNINPEDPTAIIEGNEKVVRPRLTDAEFFFKTDLKQRLEDRLPRLETVLFQQQLGTLRDKTARIEALAGEIAAQIGADKAKAERAGLLSKCDLMTNMVFEFTDTQGVMGMHYARHDGEDEEVAVALNEQYMPRFAGDELPKSLVACSVALADKFDTLTGIFGIGQAPKGSADPFALRRAALGSLRIIVEKNLPLDLEDLVRKSAALFGDKLTNANVVDDVVDFMLGRFRAWYQDEGIAVDVIQAVLARRPTKPADFDARVRAVSHFRTLDSAEALAAANKRVSNILAKVEGEISTEIDRSLLVEAEEKALAEQVISLQTELAPTFANGEYQTALDRLASLRETVDSFFEKVMVNAEDANLRRNRQAILNNLRNLFLQVADISVLQ</sequence>
<gene>
    <name evidence="1" type="primary">glyS</name>
    <name type="ordered locus">APJL_1839</name>
</gene>
<protein>
    <recommendedName>
        <fullName evidence="1">Glycine--tRNA ligase beta subunit</fullName>
        <ecNumber evidence="1">6.1.1.14</ecNumber>
    </recommendedName>
    <alternativeName>
        <fullName evidence="1">Glycyl-tRNA synthetase beta subunit</fullName>
        <shortName evidence="1">GlyRS</shortName>
    </alternativeName>
</protein>
<dbReference type="EC" id="6.1.1.14" evidence="1"/>
<dbReference type="EMBL" id="CP000687">
    <property type="protein sequence ID" value="ABY70389.1"/>
    <property type="molecule type" value="Genomic_DNA"/>
</dbReference>
<dbReference type="RefSeq" id="WP_012263395.1">
    <property type="nucleotide sequence ID" value="NC_010278.1"/>
</dbReference>
<dbReference type="SMR" id="B0BSX5"/>
<dbReference type="KEGG" id="apj:APJL_1839"/>
<dbReference type="HOGENOM" id="CLU_007220_2_2_6"/>
<dbReference type="Proteomes" id="UP000008547">
    <property type="component" value="Chromosome"/>
</dbReference>
<dbReference type="GO" id="GO:0005829">
    <property type="term" value="C:cytosol"/>
    <property type="evidence" value="ECO:0007669"/>
    <property type="project" value="TreeGrafter"/>
</dbReference>
<dbReference type="GO" id="GO:0004814">
    <property type="term" value="F:arginine-tRNA ligase activity"/>
    <property type="evidence" value="ECO:0007669"/>
    <property type="project" value="InterPro"/>
</dbReference>
<dbReference type="GO" id="GO:0005524">
    <property type="term" value="F:ATP binding"/>
    <property type="evidence" value="ECO:0007669"/>
    <property type="project" value="UniProtKB-UniRule"/>
</dbReference>
<dbReference type="GO" id="GO:0004820">
    <property type="term" value="F:glycine-tRNA ligase activity"/>
    <property type="evidence" value="ECO:0007669"/>
    <property type="project" value="UniProtKB-UniRule"/>
</dbReference>
<dbReference type="GO" id="GO:0006420">
    <property type="term" value="P:arginyl-tRNA aminoacylation"/>
    <property type="evidence" value="ECO:0007669"/>
    <property type="project" value="InterPro"/>
</dbReference>
<dbReference type="GO" id="GO:0006426">
    <property type="term" value="P:glycyl-tRNA aminoacylation"/>
    <property type="evidence" value="ECO:0007669"/>
    <property type="project" value="UniProtKB-UniRule"/>
</dbReference>
<dbReference type="Gene3D" id="1.10.730.10">
    <property type="entry name" value="Isoleucyl-tRNA Synthetase, Domain 1"/>
    <property type="match status" value="1"/>
</dbReference>
<dbReference type="HAMAP" id="MF_00255">
    <property type="entry name" value="Gly_tRNA_synth_beta"/>
    <property type="match status" value="1"/>
</dbReference>
<dbReference type="InterPro" id="IPR008909">
    <property type="entry name" value="DALR_anticod-bd"/>
</dbReference>
<dbReference type="InterPro" id="IPR015944">
    <property type="entry name" value="Gly-tRNA-synth_bsu"/>
</dbReference>
<dbReference type="InterPro" id="IPR006194">
    <property type="entry name" value="Gly-tRNA-synth_heterodimer"/>
</dbReference>
<dbReference type="NCBIfam" id="TIGR00211">
    <property type="entry name" value="glyS"/>
    <property type="match status" value="1"/>
</dbReference>
<dbReference type="PANTHER" id="PTHR30075:SF2">
    <property type="entry name" value="GLYCINE--TRNA LIGASE, CHLOROPLASTIC_MITOCHONDRIAL 2"/>
    <property type="match status" value="1"/>
</dbReference>
<dbReference type="PANTHER" id="PTHR30075">
    <property type="entry name" value="GLYCYL-TRNA SYNTHETASE"/>
    <property type="match status" value="1"/>
</dbReference>
<dbReference type="Pfam" id="PF05746">
    <property type="entry name" value="DALR_1"/>
    <property type="match status" value="1"/>
</dbReference>
<dbReference type="Pfam" id="PF02092">
    <property type="entry name" value="tRNA_synt_2f"/>
    <property type="match status" value="1"/>
</dbReference>
<dbReference type="PRINTS" id="PR01045">
    <property type="entry name" value="TRNASYNTHGB"/>
</dbReference>
<dbReference type="SMART" id="SM00836">
    <property type="entry name" value="DALR_1"/>
    <property type="match status" value="1"/>
</dbReference>
<dbReference type="SUPFAM" id="SSF109604">
    <property type="entry name" value="HD-domain/PDEase-like"/>
    <property type="match status" value="1"/>
</dbReference>
<dbReference type="PROSITE" id="PS50861">
    <property type="entry name" value="AA_TRNA_LIGASE_II_GLYAB"/>
    <property type="match status" value="1"/>
</dbReference>
<comment type="catalytic activity">
    <reaction evidence="1">
        <text>tRNA(Gly) + glycine + ATP = glycyl-tRNA(Gly) + AMP + diphosphate</text>
        <dbReference type="Rhea" id="RHEA:16013"/>
        <dbReference type="Rhea" id="RHEA-COMP:9664"/>
        <dbReference type="Rhea" id="RHEA-COMP:9683"/>
        <dbReference type="ChEBI" id="CHEBI:30616"/>
        <dbReference type="ChEBI" id="CHEBI:33019"/>
        <dbReference type="ChEBI" id="CHEBI:57305"/>
        <dbReference type="ChEBI" id="CHEBI:78442"/>
        <dbReference type="ChEBI" id="CHEBI:78522"/>
        <dbReference type="ChEBI" id="CHEBI:456215"/>
        <dbReference type="EC" id="6.1.1.14"/>
    </reaction>
</comment>
<comment type="subunit">
    <text evidence="1">Tetramer of two alpha and two beta subunits.</text>
</comment>
<comment type="subcellular location">
    <subcellularLocation>
        <location evidence="1">Cytoplasm</location>
    </subcellularLocation>
</comment>
<comment type="similarity">
    <text evidence="1">Belongs to the class-II aminoacyl-tRNA synthetase family.</text>
</comment>
<reference key="1">
    <citation type="journal article" date="2008" name="PLoS ONE">
        <title>Genome biology of Actinobacillus pleuropneumoniae JL03, an isolate of serotype 3 prevalent in China.</title>
        <authorList>
            <person name="Xu Z."/>
            <person name="Zhou Y."/>
            <person name="Li L."/>
            <person name="Zhou R."/>
            <person name="Xiao S."/>
            <person name="Wan Y."/>
            <person name="Zhang S."/>
            <person name="Wang K."/>
            <person name="Li W."/>
            <person name="Li L."/>
            <person name="Jin H."/>
            <person name="Kang M."/>
            <person name="Dalai B."/>
            <person name="Li T."/>
            <person name="Liu L."/>
            <person name="Cheng Y."/>
            <person name="Zhang L."/>
            <person name="Xu T."/>
            <person name="Zheng H."/>
            <person name="Pu S."/>
            <person name="Wang B."/>
            <person name="Gu W."/>
            <person name="Zhang X.L."/>
            <person name="Zhu G.-F."/>
            <person name="Wang S."/>
            <person name="Zhao G.-P."/>
            <person name="Chen H."/>
        </authorList>
    </citation>
    <scope>NUCLEOTIDE SEQUENCE [LARGE SCALE GENOMIC DNA]</scope>
    <source>
        <strain>JL03</strain>
    </source>
</reference>
<accession>B0BSX5</accession>
<name>SYGB_ACTPJ</name>